<keyword id="KW-0053">Apoptosis</keyword>
<keyword id="KW-0472">Membrane</keyword>
<keyword id="KW-0496">Mitochondrion</keyword>
<keyword id="KW-0597">Phosphoprotein</keyword>
<keyword id="KW-1185">Reference proteome</keyword>
<keyword id="KW-0677">Repeat</keyword>
<keyword id="KW-0812">Transmembrane</keyword>
<keyword id="KW-1133">Transmembrane helix</keyword>
<name>B2L13_MOUSE</name>
<protein>
    <recommendedName>
        <fullName>Bcl-2-like protein 13</fullName>
        <shortName>Bcl2-L-13</shortName>
    </recommendedName>
    <alternativeName>
        <fullName>Bcl-rambo</fullName>
    </alternativeName>
    <alternativeName>
        <fullName>Protein Mil1</fullName>
    </alternativeName>
</protein>
<gene>
    <name type="primary">Bcl2l13</name>
    <name type="synonym">Mil1</name>
</gene>
<reference key="1">
    <citation type="journal article" date="2005" name="Science">
        <title>The transcriptional landscape of the mammalian genome.</title>
        <authorList>
            <person name="Carninci P."/>
            <person name="Kasukawa T."/>
            <person name="Katayama S."/>
            <person name="Gough J."/>
            <person name="Frith M.C."/>
            <person name="Maeda N."/>
            <person name="Oyama R."/>
            <person name="Ravasi T."/>
            <person name="Lenhard B."/>
            <person name="Wells C."/>
            <person name="Kodzius R."/>
            <person name="Shimokawa K."/>
            <person name="Bajic V.B."/>
            <person name="Brenner S.E."/>
            <person name="Batalov S."/>
            <person name="Forrest A.R."/>
            <person name="Zavolan M."/>
            <person name="Davis M.J."/>
            <person name="Wilming L.G."/>
            <person name="Aidinis V."/>
            <person name="Allen J.E."/>
            <person name="Ambesi-Impiombato A."/>
            <person name="Apweiler R."/>
            <person name="Aturaliya R.N."/>
            <person name="Bailey T.L."/>
            <person name="Bansal M."/>
            <person name="Baxter L."/>
            <person name="Beisel K.W."/>
            <person name="Bersano T."/>
            <person name="Bono H."/>
            <person name="Chalk A.M."/>
            <person name="Chiu K.P."/>
            <person name="Choudhary V."/>
            <person name="Christoffels A."/>
            <person name="Clutterbuck D.R."/>
            <person name="Crowe M.L."/>
            <person name="Dalla E."/>
            <person name="Dalrymple B.P."/>
            <person name="de Bono B."/>
            <person name="Della Gatta G."/>
            <person name="di Bernardo D."/>
            <person name="Down T."/>
            <person name="Engstrom P."/>
            <person name="Fagiolini M."/>
            <person name="Faulkner G."/>
            <person name="Fletcher C.F."/>
            <person name="Fukushima T."/>
            <person name="Furuno M."/>
            <person name="Futaki S."/>
            <person name="Gariboldi M."/>
            <person name="Georgii-Hemming P."/>
            <person name="Gingeras T.R."/>
            <person name="Gojobori T."/>
            <person name="Green R.E."/>
            <person name="Gustincich S."/>
            <person name="Harbers M."/>
            <person name="Hayashi Y."/>
            <person name="Hensch T.K."/>
            <person name="Hirokawa N."/>
            <person name="Hill D."/>
            <person name="Huminiecki L."/>
            <person name="Iacono M."/>
            <person name="Ikeo K."/>
            <person name="Iwama A."/>
            <person name="Ishikawa T."/>
            <person name="Jakt M."/>
            <person name="Kanapin A."/>
            <person name="Katoh M."/>
            <person name="Kawasawa Y."/>
            <person name="Kelso J."/>
            <person name="Kitamura H."/>
            <person name="Kitano H."/>
            <person name="Kollias G."/>
            <person name="Krishnan S.P."/>
            <person name="Kruger A."/>
            <person name="Kummerfeld S.K."/>
            <person name="Kurochkin I.V."/>
            <person name="Lareau L.F."/>
            <person name="Lazarevic D."/>
            <person name="Lipovich L."/>
            <person name="Liu J."/>
            <person name="Liuni S."/>
            <person name="McWilliam S."/>
            <person name="Madan Babu M."/>
            <person name="Madera M."/>
            <person name="Marchionni L."/>
            <person name="Matsuda H."/>
            <person name="Matsuzawa S."/>
            <person name="Miki H."/>
            <person name="Mignone F."/>
            <person name="Miyake S."/>
            <person name="Morris K."/>
            <person name="Mottagui-Tabar S."/>
            <person name="Mulder N."/>
            <person name="Nakano N."/>
            <person name="Nakauchi H."/>
            <person name="Ng P."/>
            <person name="Nilsson R."/>
            <person name="Nishiguchi S."/>
            <person name="Nishikawa S."/>
            <person name="Nori F."/>
            <person name="Ohara O."/>
            <person name="Okazaki Y."/>
            <person name="Orlando V."/>
            <person name="Pang K.C."/>
            <person name="Pavan W.J."/>
            <person name="Pavesi G."/>
            <person name="Pesole G."/>
            <person name="Petrovsky N."/>
            <person name="Piazza S."/>
            <person name="Reed J."/>
            <person name="Reid J.F."/>
            <person name="Ring B.Z."/>
            <person name="Ringwald M."/>
            <person name="Rost B."/>
            <person name="Ruan Y."/>
            <person name="Salzberg S.L."/>
            <person name="Sandelin A."/>
            <person name="Schneider C."/>
            <person name="Schoenbach C."/>
            <person name="Sekiguchi K."/>
            <person name="Semple C.A."/>
            <person name="Seno S."/>
            <person name="Sessa L."/>
            <person name="Sheng Y."/>
            <person name="Shibata Y."/>
            <person name="Shimada H."/>
            <person name="Shimada K."/>
            <person name="Silva D."/>
            <person name="Sinclair B."/>
            <person name="Sperling S."/>
            <person name="Stupka E."/>
            <person name="Sugiura K."/>
            <person name="Sultana R."/>
            <person name="Takenaka Y."/>
            <person name="Taki K."/>
            <person name="Tammoja K."/>
            <person name="Tan S.L."/>
            <person name="Tang S."/>
            <person name="Taylor M.S."/>
            <person name="Tegner J."/>
            <person name="Teichmann S.A."/>
            <person name="Ueda H.R."/>
            <person name="van Nimwegen E."/>
            <person name="Verardo R."/>
            <person name="Wei C.L."/>
            <person name="Yagi K."/>
            <person name="Yamanishi H."/>
            <person name="Zabarovsky E."/>
            <person name="Zhu S."/>
            <person name="Zimmer A."/>
            <person name="Hide W."/>
            <person name="Bult C."/>
            <person name="Grimmond S.M."/>
            <person name="Teasdale R.D."/>
            <person name="Liu E.T."/>
            <person name="Brusic V."/>
            <person name="Quackenbush J."/>
            <person name="Wahlestedt C."/>
            <person name="Mattick J.S."/>
            <person name="Hume D.A."/>
            <person name="Kai C."/>
            <person name="Sasaki D."/>
            <person name="Tomaru Y."/>
            <person name="Fukuda S."/>
            <person name="Kanamori-Katayama M."/>
            <person name="Suzuki M."/>
            <person name="Aoki J."/>
            <person name="Arakawa T."/>
            <person name="Iida J."/>
            <person name="Imamura K."/>
            <person name="Itoh M."/>
            <person name="Kato T."/>
            <person name="Kawaji H."/>
            <person name="Kawagashira N."/>
            <person name="Kawashima T."/>
            <person name="Kojima M."/>
            <person name="Kondo S."/>
            <person name="Konno H."/>
            <person name="Nakano K."/>
            <person name="Ninomiya N."/>
            <person name="Nishio T."/>
            <person name="Okada M."/>
            <person name="Plessy C."/>
            <person name="Shibata K."/>
            <person name="Shiraki T."/>
            <person name="Suzuki S."/>
            <person name="Tagami M."/>
            <person name="Waki K."/>
            <person name="Watahiki A."/>
            <person name="Okamura-Oho Y."/>
            <person name="Suzuki H."/>
            <person name="Kawai J."/>
            <person name="Hayashizaki Y."/>
        </authorList>
    </citation>
    <scope>NUCLEOTIDE SEQUENCE [LARGE SCALE MRNA]</scope>
    <source>
        <strain>C57BL/6J</strain>
        <tissue>Cerebellum</tissue>
        <tissue>Liver</tissue>
        <tissue>Testis</tissue>
    </source>
</reference>
<reference key="2">
    <citation type="submission" date="2005-07" db="EMBL/GenBank/DDBJ databases">
        <authorList>
            <person name="Mural R.J."/>
            <person name="Adams M.D."/>
            <person name="Myers E.W."/>
            <person name="Smith H.O."/>
            <person name="Venter J.C."/>
        </authorList>
    </citation>
    <scope>NUCLEOTIDE SEQUENCE [LARGE SCALE GENOMIC DNA]</scope>
</reference>
<reference key="3">
    <citation type="journal article" date="2004" name="Genome Res.">
        <title>The status, quality, and expansion of the NIH full-length cDNA project: the Mammalian Gene Collection (MGC).</title>
        <authorList>
            <consortium name="The MGC Project Team"/>
        </authorList>
    </citation>
    <scope>NUCLEOTIDE SEQUENCE [LARGE SCALE MRNA]</scope>
    <source>
        <strain>C57BL/6J</strain>
        <tissue>Eye</tissue>
        <tissue>Mammary tumor</tissue>
    </source>
</reference>
<reference key="4">
    <citation type="journal article" date="2007" name="Mol. Cell. Proteomics">
        <title>Mitochondrial phosphoproteome revealed by an improved IMAC method and MS/MS/MS.</title>
        <authorList>
            <person name="Lee J."/>
            <person name="Xu Y."/>
            <person name="Chen Y."/>
            <person name="Sprung R."/>
            <person name="Kim S.C."/>
            <person name="Xie S."/>
            <person name="Zhao Y."/>
        </authorList>
    </citation>
    <scope>PHOSPHORYLATION [LARGE SCALE ANALYSIS] AT SER-387</scope>
    <scope>IDENTIFICATION BY MASS SPECTROMETRY [LARGE SCALE ANALYSIS]</scope>
    <source>
        <tissue>Liver</tissue>
    </source>
</reference>
<reference key="5">
    <citation type="journal article" date="2009" name="Mol. Cell. Proteomics">
        <title>Large scale localization of protein phosphorylation by use of electron capture dissociation mass spectrometry.</title>
        <authorList>
            <person name="Sweet S.M."/>
            <person name="Bailey C.M."/>
            <person name="Cunningham D.L."/>
            <person name="Heath J.K."/>
            <person name="Cooper H.J."/>
        </authorList>
    </citation>
    <scope>PHOSPHORYLATION [LARGE SCALE ANALYSIS] AT SER-343</scope>
    <scope>IDENTIFICATION BY MASS SPECTROMETRY [LARGE SCALE ANALYSIS]</scope>
    <source>
        <tissue>Embryonic fibroblast</tissue>
    </source>
</reference>
<reference key="6">
    <citation type="journal article" date="2010" name="Cell">
        <title>A tissue-specific atlas of mouse protein phosphorylation and expression.</title>
        <authorList>
            <person name="Huttlin E.L."/>
            <person name="Jedrychowski M.P."/>
            <person name="Elias J.E."/>
            <person name="Goswami T."/>
            <person name="Rad R."/>
            <person name="Beausoleil S.A."/>
            <person name="Villen J."/>
            <person name="Haas W."/>
            <person name="Sowa M.E."/>
            <person name="Gygi S.P."/>
        </authorList>
    </citation>
    <scope>PHOSPHORYLATION [LARGE SCALE ANALYSIS] AT SER-343 AND SER-347</scope>
    <scope>IDENTIFICATION BY MASS SPECTROMETRY [LARGE SCALE ANALYSIS]</scope>
    <source>
        <tissue>Brain</tissue>
        <tissue>Brown adipose tissue</tissue>
        <tissue>Heart</tissue>
        <tissue>Kidney</tissue>
        <tissue>Liver</tissue>
        <tissue>Lung</tissue>
        <tissue>Pancreas</tissue>
        <tissue>Spleen</tissue>
        <tissue>Testis</tissue>
    </source>
</reference>
<comment type="function">
    <text>May promote the activation of caspase-3 and apoptosis.</text>
</comment>
<comment type="subunit">
    <text evidence="5">Monomer.</text>
</comment>
<comment type="subcellular location">
    <subcellularLocation>
        <location evidence="1">Mitochondrion membrane</location>
        <topology evidence="1">Single-pass membrane protein</topology>
    </subcellularLocation>
</comment>
<comment type="similarity">
    <text evidence="5">Belongs to the Bcl-2 family.</text>
</comment>
<dbReference type="EMBL" id="AK047223">
    <property type="protein sequence ID" value="BAC32999.1"/>
    <property type="molecule type" value="mRNA"/>
</dbReference>
<dbReference type="EMBL" id="AK132774">
    <property type="protein sequence ID" value="BAE21351.1"/>
    <property type="molecule type" value="mRNA"/>
</dbReference>
<dbReference type="EMBL" id="AK168833">
    <property type="protein sequence ID" value="BAE40657.1"/>
    <property type="molecule type" value="mRNA"/>
</dbReference>
<dbReference type="EMBL" id="CH466523">
    <property type="protein sequence ID" value="EDK99647.1"/>
    <property type="molecule type" value="Genomic_DNA"/>
</dbReference>
<dbReference type="EMBL" id="BC027307">
    <property type="protein sequence ID" value="AAH27307.1"/>
    <property type="molecule type" value="mRNA"/>
</dbReference>
<dbReference type="EMBL" id="BC029016">
    <property type="protein sequence ID" value="AAH29016.1"/>
    <property type="molecule type" value="mRNA"/>
</dbReference>
<dbReference type="CCDS" id="CCDS20485.1"/>
<dbReference type="RefSeq" id="NP_705736.1">
    <property type="nucleotide sequence ID" value="NM_153516.2"/>
</dbReference>
<dbReference type="BioGRID" id="220423">
    <property type="interactions" value="1"/>
</dbReference>
<dbReference type="FunCoup" id="P59017">
    <property type="interactions" value="2462"/>
</dbReference>
<dbReference type="IntAct" id="P59017">
    <property type="interactions" value="1"/>
</dbReference>
<dbReference type="STRING" id="10090.ENSMUSP00000009256"/>
<dbReference type="GlyGen" id="P59017">
    <property type="glycosylation" value="2 sites, 1 O-linked glycan (1 site)"/>
</dbReference>
<dbReference type="iPTMnet" id="P59017"/>
<dbReference type="PhosphoSitePlus" id="P59017"/>
<dbReference type="SwissPalm" id="P59017"/>
<dbReference type="jPOST" id="P59017"/>
<dbReference type="PaxDb" id="10090-ENSMUSP00000009256"/>
<dbReference type="PeptideAtlas" id="P59017"/>
<dbReference type="ProteomicsDB" id="273455"/>
<dbReference type="Pumba" id="P59017"/>
<dbReference type="TopDownProteomics" id="P59017"/>
<dbReference type="Antibodypedia" id="3673">
    <property type="antibodies" value="267 antibodies from 35 providers"/>
</dbReference>
<dbReference type="DNASU" id="94044"/>
<dbReference type="Ensembl" id="ENSMUST00000009256.4">
    <property type="protein sequence ID" value="ENSMUSP00000009256.3"/>
    <property type="gene ID" value="ENSMUSG00000009112.5"/>
</dbReference>
<dbReference type="GeneID" id="94044"/>
<dbReference type="KEGG" id="mmu:94044"/>
<dbReference type="UCSC" id="uc009dnt.1">
    <property type="organism name" value="mouse"/>
</dbReference>
<dbReference type="AGR" id="MGI:2136959"/>
<dbReference type="CTD" id="23786"/>
<dbReference type="MGI" id="MGI:2136959">
    <property type="gene designation" value="Bcl2l13"/>
</dbReference>
<dbReference type="VEuPathDB" id="HostDB:ENSMUSG00000009112"/>
<dbReference type="eggNOG" id="ENOG502R6AP">
    <property type="taxonomic scope" value="Eukaryota"/>
</dbReference>
<dbReference type="GeneTree" id="ENSGT00390000015552"/>
<dbReference type="HOGENOM" id="CLU_032647_0_0_1"/>
<dbReference type="InParanoid" id="P59017"/>
<dbReference type="OMA" id="MHEALQT"/>
<dbReference type="OrthoDB" id="8959856at2759"/>
<dbReference type="PhylomeDB" id="P59017"/>
<dbReference type="TreeFam" id="TF330744"/>
<dbReference type="BioGRID-ORCS" id="94044">
    <property type="hits" value="1 hit in 77 CRISPR screens"/>
</dbReference>
<dbReference type="CD-CODE" id="CE726F99">
    <property type="entry name" value="Postsynaptic density"/>
</dbReference>
<dbReference type="ChiTaRS" id="Bcl2l13">
    <property type="organism name" value="mouse"/>
</dbReference>
<dbReference type="PRO" id="PR:P59017"/>
<dbReference type="Proteomes" id="UP000000589">
    <property type="component" value="Chromosome 6"/>
</dbReference>
<dbReference type="RNAct" id="P59017">
    <property type="molecule type" value="protein"/>
</dbReference>
<dbReference type="Bgee" id="ENSMUSG00000009112">
    <property type="expression patterns" value="Expressed in substantia propria of cornea and 264 other cell types or tissues"/>
</dbReference>
<dbReference type="ExpressionAtlas" id="P59017">
    <property type="expression patterns" value="baseline and differential"/>
</dbReference>
<dbReference type="GO" id="GO:0016020">
    <property type="term" value="C:membrane"/>
    <property type="evidence" value="ECO:0000250"/>
    <property type="project" value="UniProtKB"/>
</dbReference>
<dbReference type="GO" id="GO:0031966">
    <property type="term" value="C:mitochondrial membrane"/>
    <property type="evidence" value="ECO:0007669"/>
    <property type="project" value="UniProtKB-SubCell"/>
</dbReference>
<dbReference type="GO" id="GO:0005739">
    <property type="term" value="C:mitochondrion"/>
    <property type="evidence" value="ECO:0000315"/>
    <property type="project" value="MGI"/>
</dbReference>
<dbReference type="GO" id="GO:0006915">
    <property type="term" value="P:apoptotic process"/>
    <property type="evidence" value="ECO:0000315"/>
    <property type="project" value="MGI"/>
</dbReference>
<dbReference type="GO" id="GO:0061621">
    <property type="term" value="P:canonical glycolysis"/>
    <property type="evidence" value="ECO:0000315"/>
    <property type="project" value="MGI"/>
</dbReference>
<dbReference type="GO" id="GO:0045444">
    <property type="term" value="P:fat cell differentiation"/>
    <property type="evidence" value="ECO:0000315"/>
    <property type="project" value="MGI"/>
</dbReference>
<dbReference type="GO" id="GO:0007005">
    <property type="term" value="P:mitochondrion organization"/>
    <property type="evidence" value="ECO:0000314"/>
    <property type="project" value="MGI"/>
</dbReference>
<dbReference type="GO" id="GO:0000423">
    <property type="term" value="P:mitophagy"/>
    <property type="evidence" value="ECO:0000315"/>
    <property type="project" value="MGI"/>
</dbReference>
<dbReference type="GO" id="GO:0006119">
    <property type="term" value="P:oxidative phosphorylation"/>
    <property type="evidence" value="ECO:0000315"/>
    <property type="project" value="MGI"/>
</dbReference>
<dbReference type="GO" id="GO:0042981">
    <property type="term" value="P:regulation of apoptotic process"/>
    <property type="evidence" value="ECO:0007669"/>
    <property type="project" value="InterPro"/>
</dbReference>
<dbReference type="FunFam" id="1.10.437.10:FF:000015">
    <property type="entry name" value="BCL2 like 13"/>
    <property type="match status" value="1"/>
</dbReference>
<dbReference type="Gene3D" id="1.10.437.10">
    <property type="entry name" value="Blc2-like"/>
    <property type="match status" value="1"/>
</dbReference>
<dbReference type="InterPro" id="IPR036834">
    <property type="entry name" value="Bcl-2-like_sf"/>
</dbReference>
<dbReference type="InterPro" id="IPR046371">
    <property type="entry name" value="Bcl-2_BH1-3"/>
</dbReference>
<dbReference type="InterPro" id="IPR002475">
    <property type="entry name" value="Bcl2-like"/>
</dbReference>
<dbReference type="InterPro" id="IPR042398">
    <property type="entry name" value="BCL2L13"/>
</dbReference>
<dbReference type="PANTHER" id="PTHR15758">
    <property type="entry name" value="BCL-2-LIKE PROTEIN 13"/>
    <property type="match status" value="1"/>
</dbReference>
<dbReference type="PANTHER" id="PTHR15758:SF2">
    <property type="entry name" value="BCL-2-LIKE PROTEIN 13"/>
    <property type="match status" value="1"/>
</dbReference>
<dbReference type="Pfam" id="PF00452">
    <property type="entry name" value="Bcl-2"/>
    <property type="match status" value="1"/>
</dbReference>
<dbReference type="SUPFAM" id="SSF56854">
    <property type="entry name" value="Bcl-2 inhibitors of programmed cell death"/>
    <property type="match status" value="1"/>
</dbReference>
<dbReference type="PROSITE" id="PS50062">
    <property type="entry name" value="BCL2_FAMILY"/>
    <property type="match status" value="1"/>
</dbReference>
<feature type="chain" id="PRO_0000143074" description="Bcl-2-like protein 13">
    <location>
        <begin position="1"/>
        <end position="434"/>
    </location>
</feature>
<feature type="transmembrane region" description="Helical" evidence="3">
    <location>
        <begin position="409"/>
        <end position="429"/>
    </location>
</feature>
<feature type="repeat" description="A">
    <location>
        <begin position="243"/>
        <end position="253"/>
    </location>
</feature>
<feature type="repeat" description="A; approximate">
    <location>
        <begin position="258"/>
        <end position="268"/>
    </location>
</feature>
<feature type="region of interest" description="Disordered" evidence="4">
    <location>
        <begin position="224"/>
        <end position="245"/>
    </location>
</feature>
<feature type="region of interest" description="Disordered" evidence="4">
    <location>
        <begin position="282"/>
        <end position="303"/>
    </location>
</feature>
<feature type="region of interest" description="Disordered" evidence="4">
    <location>
        <begin position="363"/>
        <end position="398"/>
    </location>
</feature>
<feature type="short sequence motif" description="BH4">
    <location>
        <begin position="14"/>
        <end position="30"/>
    </location>
</feature>
<feature type="short sequence motif" description="BH3">
    <location>
        <begin position="97"/>
        <end position="113"/>
    </location>
</feature>
<feature type="short sequence motif" description="BH1">
    <location>
        <begin position="144"/>
        <end position="154"/>
    </location>
</feature>
<feature type="short sequence motif" description="BH2">
    <location>
        <begin position="190"/>
        <end position="203"/>
    </location>
</feature>
<feature type="compositionally biased region" description="Polar residues" evidence="4">
    <location>
        <begin position="226"/>
        <end position="245"/>
    </location>
</feature>
<feature type="compositionally biased region" description="Basic and acidic residues" evidence="4">
    <location>
        <begin position="365"/>
        <end position="382"/>
    </location>
</feature>
<feature type="modified residue" description="Phosphoserine" evidence="2">
    <location>
        <position position="35"/>
    </location>
</feature>
<feature type="modified residue" description="Phosphoserine" evidence="2">
    <location>
        <position position="256"/>
    </location>
</feature>
<feature type="modified residue" description="Phosphoserine" evidence="2">
    <location>
        <position position="258"/>
    </location>
</feature>
<feature type="modified residue" description="Phosphoserine" evidence="2">
    <location>
        <position position="300"/>
    </location>
</feature>
<feature type="modified residue" description="Phosphoserine" evidence="7 8">
    <location>
        <position position="343"/>
    </location>
</feature>
<feature type="modified residue" description="Phosphoserine" evidence="8">
    <location>
        <position position="347"/>
    </location>
</feature>
<feature type="modified residue" description="Phosphoserine" evidence="2">
    <location>
        <position position="377"/>
    </location>
</feature>
<feature type="modified residue" description="Phosphoserine" evidence="6">
    <location>
        <position position="387"/>
    </location>
</feature>
<feature type="sequence conflict" description="In Ref. 3; AAH27307." evidence="5" ref="3">
    <original>S</original>
    <variation>P</variation>
    <location>
        <position position="8"/>
    </location>
</feature>
<feature type="sequence conflict" description="In Ref. 3; AAH27307." evidence="5" ref="3">
    <original>T</original>
    <variation>A</variation>
    <location>
        <position position="66"/>
    </location>
</feature>
<feature type="sequence conflict" description="In Ref. 3; AAH27307." evidence="5" ref="3">
    <original>T</original>
    <variation>A</variation>
    <location>
        <position position="326"/>
    </location>
</feature>
<evidence type="ECO:0000250" key="1"/>
<evidence type="ECO:0000250" key="2">
    <source>
        <dbReference type="UniProtKB" id="Q9BXK5"/>
    </source>
</evidence>
<evidence type="ECO:0000255" key="3"/>
<evidence type="ECO:0000256" key="4">
    <source>
        <dbReference type="SAM" id="MobiDB-lite"/>
    </source>
</evidence>
<evidence type="ECO:0000305" key="5"/>
<evidence type="ECO:0007744" key="6">
    <source>
    </source>
</evidence>
<evidence type="ECO:0007744" key="7">
    <source>
    </source>
</evidence>
<evidence type="ECO:0007744" key="8">
    <source>
    </source>
</evidence>
<accession>P59017</accession>
<accession>Q543S1</accession>
<sequence length="434" mass="46719">MASSTTASLGFHYETKYVVLSYLGLLSQEKQQGPSPPGVQLDVAPQSLNPEVLLKLKSEIEEELKTLDKEVSEAFTSTGFDCHTSPVFSPANPESSIEDCLAHLGERVSQDLKEPLQKALQTILSQPVTYEAYRECTVETAVHASGWNKLLVPLVLLQHLLLELTRRGQEPLRMLLQFGVMYLEEHAAEFIIQQGGWGSVFSLEPEEEEYPGIIAEDSNDIYILPSDNSGQVSPPESPTVTTSWQSESLPVSLSASQSWHTESLPVSLGPESWQQIAMDPEEVKSLDSSGAGEKSENNSSNSDIVHVEKEEVPEEAFPGAAAPLLTQVPTVEAPEMMRAEKTSPTPSVFVELGEEELEAVTARPEAVERAEGAAQLSEERAGSRKKSHTGEAAAVRGAKSGLPAEGKAVLLFGGAAAVAILAVAVGVALALRRK</sequence>
<organism>
    <name type="scientific">Mus musculus</name>
    <name type="common">Mouse</name>
    <dbReference type="NCBI Taxonomy" id="10090"/>
    <lineage>
        <taxon>Eukaryota</taxon>
        <taxon>Metazoa</taxon>
        <taxon>Chordata</taxon>
        <taxon>Craniata</taxon>
        <taxon>Vertebrata</taxon>
        <taxon>Euteleostomi</taxon>
        <taxon>Mammalia</taxon>
        <taxon>Eutheria</taxon>
        <taxon>Euarchontoglires</taxon>
        <taxon>Glires</taxon>
        <taxon>Rodentia</taxon>
        <taxon>Myomorpha</taxon>
        <taxon>Muroidea</taxon>
        <taxon>Muridae</taxon>
        <taxon>Murinae</taxon>
        <taxon>Mus</taxon>
        <taxon>Mus</taxon>
    </lineage>
</organism>
<proteinExistence type="evidence at protein level"/>